<proteinExistence type="inferred from homology"/>
<protein>
    <recommendedName>
        <fullName evidence="1">Nucleoside diphosphate kinase</fullName>
        <shortName evidence="1">NDK</shortName>
        <shortName evidence="1">NDP kinase</shortName>
        <ecNumber evidence="1">2.7.4.6</ecNumber>
    </recommendedName>
    <alternativeName>
        <fullName evidence="1">Nucleoside-2-P kinase</fullName>
    </alternativeName>
</protein>
<accession>A0K7T9</accession>
<gene>
    <name evidence="1" type="primary">ndk</name>
    <name type="ordered locus">Bcen2424_1815</name>
</gene>
<evidence type="ECO:0000255" key="1">
    <source>
        <dbReference type="HAMAP-Rule" id="MF_00451"/>
    </source>
</evidence>
<name>NDK_BURCH</name>
<sequence>MAIERTLSIIKPDAVAKNVIGQIYSRFEGAGLKIVASRMAHLSRADAEKFYAVHAARPFFKDLVDFMISGPVMIQVLEGEGAILKNRDLMGATDPKKAEKGTIRADFADSIDANAVHGSDAAETAAVEIAFFFPEMNVYSR</sequence>
<feature type="chain" id="PRO_1000026212" description="Nucleoside diphosphate kinase">
    <location>
        <begin position="1"/>
        <end position="141"/>
    </location>
</feature>
<feature type="active site" description="Pros-phosphohistidine intermediate" evidence="1">
    <location>
        <position position="117"/>
    </location>
</feature>
<feature type="binding site" evidence="1">
    <location>
        <position position="11"/>
    </location>
    <ligand>
        <name>ATP</name>
        <dbReference type="ChEBI" id="CHEBI:30616"/>
    </ligand>
</feature>
<feature type="binding site" evidence="1">
    <location>
        <position position="59"/>
    </location>
    <ligand>
        <name>ATP</name>
        <dbReference type="ChEBI" id="CHEBI:30616"/>
    </ligand>
</feature>
<feature type="binding site" evidence="1">
    <location>
        <position position="87"/>
    </location>
    <ligand>
        <name>ATP</name>
        <dbReference type="ChEBI" id="CHEBI:30616"/>
    </ligand>
</feature>
<feature type="binding site" evidence="1">
    <location>
        <position position="93"/>
    </location>
    <ligand>
        <name>ATP</name>
        <dbReference type="ChEBI" id="CHEBI:30616"/>
    </ligand>
</feature>
<feature type="binding site" evidence="1">
    <location>
        <position position="104"/>
    </location>
    <ligand>
        <name>ATP</name>
        <dbReference type="ChEBI" id="CHEBI:30616"/>
    </ligand>
</feature>
<feature type="binding site" evidence="1">
    <location>
        <position position="114"/>
    </location>
    <ligand>
        <name>ATP</name>
        <dbReference type="ChEBI" id="CHEBI:30616"/>
    </ligand>
</feature>
<organism>
    <name type="scientific">Burkholderia cenocepacia (strain HI2424)</name>
    <dbReference type="NCBI Taxonomy" id="331272"/>
    <lineage>
        <taxon>Bacteria</taxon>
        <taxon>Pseudomonadati</taxon>
        <taxon>Pseudomonadota</taxon>
        <taxon>Betaproteobacteria</taxon>
        <taxon>Burkholderiales</taxon>
        <taxon>Burkholderiaceae</taxon>
        <taxon>Burkholderia</taxon>
        <taxon>Burkholderia cepacia complex</taxon>
    </lineage>
</organism>
<comment type="function">
    <text evidence="1">Major role in the synthesis of nucleoside triphosphates other than ATP. The ATP gamma phosphate is transferred to the NDP beta phosphate via a ping-pong mechanism, using a phosphorylated active-site intermediate.</text>
</comment>
<comment type="catalytic activity">
    <reaction evidence="1">
        <text>a 2'-deoxyribonucleoside 5'-diphosphate + ATP = a 2'-deoxyribonucleoside 5'-triphosphate + ADP</text>
        <dbReference type="Rhea" id="RHEA:44640"/>
        <dbReference type="ChEBI" id="CHEBI:30616"/>
        <dbReference type="ChEBI" id="CHEBI:61560"/>
        <dbReference type="ChEBI" id="CHEBI:73316"/>
        <dbReference type="ChEBI" id="CHEBI:456216"/>
        <dbReference type="EC" id="2.7.4.6"/>
    </reaction>
</comment>
<comment type="catalytic activity">
    <reaction evidence="1">
        <text>a ribonucleoside 5'-diphosphate + ATP = a ribonucleoside 5'-triphosphate + ADP</text>
        <dbReference type="Rhea" id="RHEA:18113"/>
        <dbReference type="ChEBI" id="CHEBI:30616"/>
        <dbReference type="ChEBI" id="CHEBI:57930"/>
        <dbReference type="ChEBI" id="CHEBI:61557"/>
        <dbReference type="ChEBI" id="CHEBI:456216"/>
        <dbReference type="EC" id="2.7.4.6"/>
    </reaction>
</comment>
<comment type="cofactor">
    <cofactor evidence="1">
        <name>Mg(2+)</name>
        <dbReference type="ChEBI" id="CHEBI:18420"/>
    </cofactor>
</comment>
<comment type="subunit">
    <text evidence="1">Homotetramer.</text>
</comment>
<comment type="subcellular location">
    <subcellularLocation>
        <location evidence="1">Cytoplasm</location>
    </subcellularLocation>
</comment>
<comment type="similarity">
    <text evidence="1">Belongs to the NDK family.</text>
</comment>
<reference key="1">
    <citation type="submission" date="2006-08" db="EMBL/GenBank/DDBJ databases">
        <title>Complete sequence of chromosome 1 of Burkholderia cenocepacia HI2424.</title>
        <authorList>
            <person name="Copeland A."/>
            <person name="Lucas S."/>
            <person name="Lapidus A."/>
            <person name="Barry K."/>
            <person name="Detter J.C."/>
            <person name="Glavina del Rio T."/>
            <person name="Hammon N."/>
            <person name="Israni S."/>
            <person name="Pitluck S."/>
            <person name="Chain P."/>
            <person name="Malfatti S."/>
            <person name="Shin M."/>
            <person name="Vergez L."/>
            <person name="Schmutz J."/>
            <person name="Larimer F."/>
            <person name="Land M."/>
            <person name="Hauser L."/>
            <person name="Kyrpides N."/>
            <person name="Kim E."/>
            <person name="LiPuma J.J."/>
            <person name="Gonzalez C.F."/>
            <person name="Konstantinidis K."/>
            <person name="Tiedje J.M."/>
            <person name="Richardson P."/>
        </authorList>
    </citation>
    <scope>NUCLEOTIDE SEQUENCE [LARGE SCALE GENOMIC DNA]</scope>
    <source>
        <strain>HI2424</strain>
    </source>
</reference>
<keyword id="KW-0067">ATP-binding</keyword>
<keyword id="KW-0963">Cytoplasm</keyword>
<keyword id="KW-0418">Kinase</keyword>
<keyword id="KW-0460">Magnesium</keyword>
<keyword id="KW-0479">Metal-binding</keyword>
<keyword id="KW-0546">Nucleotide metabolism</keyword>
<keyword id="KW-0547">Nucleotide-binding</keyword>
<keyword id="KW-0597">Phosphoprotein</keyword>
<keyword id="KW-0808">Transferase</keyword>
<dbReference type="EC" id="2.7.4.6" evidence="1"/>
<dbReference type="EMBL" id="CP000458">
    <property type="protein sequence ID" value="ABK08566.1"/>
    <property type="molecule type" value="Genomic_DNA"/>
</dbReference>
<dbReference type="RefSeq" id="WP_006478674.1">
    <property type="nucleotide sequence ID" value="NC_008542.1"/>
</dbReference>
<dbReference type="SMR" id="A0K7T9"/>
<dbReference type="GeneID" id="93191833"/>
<dbReference type="KEGG" id="bch:Bcen2424_1815"/>
<dbReference type="HOGENOM" id="CLU_060216_8_1_4"/>
<dbReference type="GO" id="GO:0005737">
    <property type="term" value="C:cytoplasm"/>
    <property type="evidence" value="ECO:0007669"/>
    <property type="project" value="UniProtKB-SubCell"/>
</dbReference>
<dbReference type="GO" id="GO:0005524">
    <property type="term" value="F:ATP binding"/>
    <property type="evidence" value="ECO:0007669"/>
    <property type="project" value="UniProtKB-UniRule"/>
</dbReference>
<dbReference type="GO" id="GO:0046872">
    <property type="term" value="F:metal ion binding"/>
    <property type="evidence" value="ECO:0007669"/>
    <property type="project" value="UniProtKB-KW"/>
</dbReference>
<dbReference type="GO" id="GO:0004550">
    <property type="term" value="F:nucleoside diphosphate kinase activity"/>
    <property type="evidence" value="ECO:0007669"/>
    <property type="project" value="UniProtKB-UniRule"/>
</dbReference>
<dbReference type="GO" id="GO:0006241">
    <property type="term" value="P:CTP biosynthetic process"/>
    <property type="evidence" value="ECO:0007669"/>
    <property type="project" value="UniProtKB-UniRule"/>
</dbReference>
<dbReference type="GO" id="GO:0006183">
    <property type="term" value="P:GTP biosynthetic process"/>
    <property type="evidence" value="ECO:0007669"/>
    <property type="project" value="UniProtKB-UniRule"/>
</dbReference>
<dbReference type="GO" id="GO:0006228">
    <property type="term" value="P:UTP biosynthetic process"/>
    <property type="evidence" value="ECO:0007669"/>
    <property type="project" value="UniProtKB-UniRule"/>
</dbReference>
<dbReference type="CDD" id="cd04413">
    <property type="entry name" value="NDPk_I"/>
    <property type="match status" value="1"/>
</dbReference>
<dbReference type="FunFam" id="3.30.70.141:FF:000001">
    <property type="entry name" value="Nucleoside diphosphate kinase"/>
    <property type="match status" value="1"/>
</dbReference>
<dbReference type="Gene3D" id="3.30.70.141">
    <property type="entry name" value="Nucleoside diphosphate kinase-like domain"/>
    <property type="match status" value="1"/>
</dbReference>
<dbReference type="HAMAP" id="MF_00451">
    <property type="entry name" value="NDP_kinase"/>
    <property type="match status" value="1"/>
</dbReference>
<dbReference type="InterPro" id="IPR034907">
    <property type="entry name" value="NDK-like_dom"/>
</dbReference>
<dbReference type="InterPro" id="IPR036850">
    <property type="entry name" value="NDK-like_dom_sf"/>
</dbReference>
<dbReference type="InterPro" id="IPR001564">
    <property type="entry name" value="Nucleoside_diP_kinase"/>
</dbReference>
<dbReference type="NCBIfam" id="NF001908">
    <property type="entry name" value="PRK00668.1"/>
    <property type="match status" value="1"/>
</dbReference>
<dbReference type="PANTHER" id="PTHR46161">
    <property type="entry name" value="NUCLEOSIDE DIPHOSPHATE KINASE"/>
    <property type="match status" value="1"/>
</dbReference>
<dbReference type="PANTHER" id="PTHR46161:SF3">
    <property type="entry name" value="NUCLEOSIDE DIPHOSPHATE KINASE DDB_G0292928-RELATED"/>
    <property type="match status" value="1"/>
</dbReference>
<dbReference type="Pfam" id="PF00334">
    <property type="entry name" value="NDK"/>
    <property type="match status" value="1"/>
</dbReference>
<dbReference type="PRINTS" id="PR01243">
    <property type="entry name" value="NUCDPKINASE"/>
</dbReference>
<dbReference type="SMART" id="SM00562">
    <property type="entry name" value="NDK"/>
    <property type="match status" value="1"/>
</dbReference>
<dbReference type="SUPFAM" id="SSF54919">
    <property type="entry name" value="Nucleoside diphosphate kinase, NDK"/>
    <property type="match status" value="1"/>
</dbReference>
<dbReference type="PROSITE" id="PS51374">
    <property type="entry name" value="NDPK_LIKE"/>
    <property type="match status" value="1"/>
</dbReference>